<organism>
    <name type="scientific">Rhizobium johnstonii (strain DSM 114642 / LMG 32736 / 3841)</name>
    <name type="common">Rhizobium leguminosarum bv. viciae</name>
    <dbReference type="NCBI Taxonomy" id="216596"/>
    <lineage>
        <taxon>Bacteria</taxon>
        <taxon>Pseudomonadati</taxon>
        <taxon>Pseudomonadota</taxon>
        <taxon>Alphaproteobacteria</taxon>
        <taxon>Hyphomicrobiales</taxon>
        <taxon>Rhizobiaceae</taxon>
        <taxon>Rhizobium/Agrobacterium group</taxon>
        <taxon>Rhizobium</taxon>
        <taxon>Rhizobium johnstonii</taxon>
    </lineage>
</organism>
<evidence type="ECO:0000255" key="1">
    <source>
        <dbReference type="HAMAP-Rule" id="MF_01961"/>
    </source>
</evidence>
<evidence type="ECO:0000256" key="2">
    <source>
        <dbReference type="SAM" id="MobiDB-lite"/>
    </source>
</evidence>
<keyword id="KW-0349">Heme</keyword>
<keyword id="KW-0376">Hydrogen peroxide</keyword>
<keyword id="KW-0408">Iron</keyword>
<keyword id="KW-0479">Metal-binding</keyword>
<keyword id="KW-0560">Oxidoreductase</keyword>
<keyword id="KW-0575">Peroxidase</keyword>
<keyword id="KW-0614">Plasmid</keyword>
<keyword id="KW-0732">Signal</keyword>
<dbReference type="EC" id="1.11.1.21" evidence="1"/>
<dbReference type="EMBL" id="AM236086">
    <property type="protein sequence ID" value="CAK12074.1"/>
    <property type="molecule type" value="Genomic_DNA"/>
</dbReference>
<dbReference type="RefSeq" id="WP_011649134.1">
    <property type="nucleotide sequence ID" value="NC_008378.1"/>
</dbReference>
<dbReference type="SMR" id="Q1M498"/>
<dbReference type="EnsemblBacteria" id="CAK12074">
    <property type="protein sequence ID" value="CAK12074"/>
    <property type="gene ID" value="pRL120362"/>
</dbReference>
<dbReference type="KEGG" id="rle:pRL120362"/>
<dbReference type="eggNOG" id="COG0376">
    <property type="taxonomic scope" value="Bacteria"/>
</dbReference>
<dbReference type="HOGENOM" id="CLU_025424_2_0_5"/>
<dbReference type="Proteomes" id="UP000006575">
    <property type="component" value="Plasmid pRL12"/>
</dbReference>
<dbReference type="GO" id="GO:0005829">
    <property type="term" value="C:cytosol"/>
    <property type="evidence" value="ECO:0007669"/>
    <property type="project" value="TreeGrafter"/>
</dbReference>
<dbReference type="GO" id="GO:0004096">
    <property type="term" value="F:catalase activity"/>
    <property type="evidence" value="ECO:0007669"/>
    <property type="project" value="UniProtKB-UniRule"/>
</dbReference>
<dbReference type="GO" id="GO:0020037">
    <property type="term" value="F:heme binding"/>
    <property type="evidence" value="ECO:0007669"/>
    <property type="project" value="InterPro"/>
</dbReference>
<dbReference type="GO" id="GO:0046872">
    <property type="term" value="F:metal ion binding"/>
    <property type="evidence" value="ECO:0007669"/>
    <property type="project" value="UniProtKB-KW"/>
</dbReference>
<dbReference type="GO" id="GO:0070301">
    <property type="term" value="P:cellular response to hydrogen peroxide"/>
    <property type="evidence" value="ECO:0007669"/>
    <property type="project" value="TreeGrafter"/>
</dbReference>
<dbReference type="GO" id="GO:0042744">
    <property type="term" value="P:hydrogen peroxide catabolic process"/>
    <property type="evidence" value="ECO:0007669"/>
    <property type="project" value="UniProtKB-KW"/>
</dbReference>
<dbReference type="CDD" id="cd00649">
    <property type="entry name" value="catalase_peroxidase_1"/>
    <property type="match status" value="1"/>
</dbReference>
<dbReference type="CDD" id="cd08200">
    <property type="entry name" value="catalase_peroxidase_2"/>
    <property type="match status" value="1"/>
</dbReference>
<dbReference type="FunFam" id="1.10.420.10:FF:000002">
    <property type="entry name" value="Catalase-peroxidase"/>
    <property type="match status" value="1"/>
</dbReference>
<dbReference type="FunFam" id="1.10.420.10:FF:000004">
    <property type="entry name" value="Catalase-peroxidase"/>
    <property type="match status" value="1"/>
</dbReference>
<dbReference type="FunFam" id="1.10.520.10:FF:000002">
    <property type="entry name" value="Catalase-peroxidase"/>
    <property type="match status" value="1"/>
</dbReference>
<dbReference type="Gene3D" id="1.10.520.10">
    <property type="match status" value="2"/>
</dbReference>
<dbReference type="Gene3D" id="1.10.420.10">
    <property type="entry name" value="Peroxidase, domain 2"/>
    <property type="match status" value="2"/>
</dbReference>
<dbReference type="HAMAP" id="MF_01961">
    <property type="entry name" value="Catal_peroxid"/>
    <property type="match status" value="1"/>
</dbReference>
<dbReference type="InterPro" id="IPR000763">
    <property type="entry name" value="Catalase_peroxidase"/>
</dbReference>
<dbReference type="InterPro" id="IPR002016">
    <property type="entry name" value="Haem_peroxidase"/>
</dbReference>
<dbReference type="InterPro" id="IPR010255">
    <property type="entry name" value="Haem_peroxidase_sf"/>
</dbReference>
<dbReference type="InterPro" id="IPR019794">
    <property type="entry name" value="Peroxidases_AS"/>
</dbReference>
<dbReference type="InterPro" id="IPR019793">
    <property type="entry name" value="Peroxidases_heam-ligand_BS"/>
</dbReference>
<dbReference type="NCBIfam" id="TIGR00198">
    <property type="entry name" value="cat_per_HPI"/>
    <property type="match status" value="1"/>
</dbReference>
<dbReference type="NCBIfam" id="NF011635">
    <property type="entry name" value="PRK15061.1"/>
    <property type="match status" value="1"/>
</dbReference>
<dbReference type="PANTHER" id="PTHR30555:SF0">
    <property type="entry name" value="CATALASE-PEROXIDASE"/>
    <property type="match status" value="1"/>
</dbReference>
<dbReference type="PANTHER" id="PTHR30555">
    <property type="entry name" value="HYDROPEROXIDASE I, BIFUNCTIONAL CATALASE-PEROXIDASE"/>
    <property type="match status" value="1"/>
</dbReference>
<dbReference type="Pfam" id="PF00141">
    <property type="entry name" value="peroxidase"/>
    <property type="match status" value="2"/>
</dbReference>
<dbReference type="PRINTS" id="PR00460">
    <property type="entry name" value="BPEROXIDASE"/>
</dbReference>
<dbReference type="PRINTS" id="PR00458">
    <property type="entry name" value="PEROXIDASE"/>
</dbReference>
<dbReference type="SUPFAM" id="SSF48113">
    <property type="entry name" value="Heme-dependent peroxidases"/>
    <property type="match status" value="2"/>
</dbReference>
<dbReference type="PROSITE" id="PS00435">
    <property type="entry name" value="PEROXIDASE_1"/>
    <property type="match status" value="1"/>
</dbReference>
<dbReference type="PROSITE" id="PS00436">
    <property type="entry name" value="PEROXIDASE_2"/>
    <property type="match status" value="1"/>
</dbReference>
<dbReference type="PROSITE" id="PS50873">
    <property type="entry name" value="PEROXIDASE_4"/>
    <property type="match status" value="1"/>
</dbReference>
<comment type="function">
    <text evidence="1">Bifunctional enzyme with both catalase and broad-spectrum peroxidase activity.</text>
</comment>
<comment type="catalytic activity">
    <reaction evidence="1">
        <text>H2O2 + AH2 = A + 2 H2O</text>
        <dbReference type="Rhea" id="RHEA:30275"/>
        <dbReference type="ChEBI" id="CHEBI:13193"/>
        <dbReference type="ChEBI" id="CHEBI:15377"/>
        <dbReference type="ChEBI" id="CHEBI:16240"/>
        <dbReference type="ChEBI" id="CHEBI:17499"/>
        <dbReference type="EC" id="1.11.1.21"/>
    </reaction>
</comment>
<comment type="catalytic activity">
    <reaction evidence="1">
        <text>2 H2O2 = O2 + 2 H2O</text>
        <dbReference type="Rhea" id="RHEA:20309"/>
        <dbReference type="ChEBI" id="CHEBI:15377"/>
        <dbReference type="ChEBI" id="CHEBI:15379"/>
        <dbReference type="ChEBI" id="CHEBI:16240"/>
        <dbReference type="EC" id="1.11.1.21"/>
    </reaction>
</comment>
<comment type="cofactor">
    <cofactor evidence="1">
        <name>heme b</name>
        <dbReference type="ChEBI" id="CHEBI:60344"/>
    </cofactor>
    <text evidence="1">Binds 1 heme b (iron(II)-protoporphyrin IX) group per dimer.</text>
</comment>
<comment type="subunit">
    <text evidence="1">Homodimer or homotetramer.</text>
</comment>
<comment type="PTM">
    <text evidence="1">Formation of the three residue Trp-Tyr-Met cross-link is important for the catalase, but not the peroxidase activity of the enzyme.</text>
</comment>
<comment type="similarity">
    <text evidence="1">Belongs to the peroxidase family. Peroxidase/catalase subfamily.</text>
</comment>
<sequence>MDNPTDSAGKCPVAHGNTPRSRSNRDWWPDQLNVQILHQNSGRADPLGQAFDYAEEFKKLDLDGLKKDLHALMTDSQDWWPADFGHYGGLFIRMAWHSAGTYRITDGRGGAGAGQQRFAPLNSWPDNVNLDKARRLLWPIKQKYGNRISWADLLILTGNVALESMGFKTFGFAGGRADVWEPEELYWGPEGTWLGDERYSGERGLAEPLGAVQMGLIYVNPEGPNGTPDPLASARDIRETFARMAMNDEETVALIAGGHTFGKTHGAGDPSFVGVDPEGGELEAQGLGWTSKFNTGVGRDAIGSGLEVTWTQTPTQWSNYFFENLFAFEWELTKSPGGAHQWQAKNADASIPDAYDASKRHLPTMLTSDLALRFDPVYEKISRRFLENPDQFADAFARAWFKLTHRDMGPKVRYLGPEVPAEDLIWQDVIPAVDHPLVDDKDIADLKEKVLATGLTVQELVSTAWASASTFRGSDKRGGANGARIRLAPQKDWEVNQPAQLAKVLGVLEGIQKNFNAAQTGAKKISLADLIVLGGAAGVEKAAAAGGHAVSVPFTPGRMDASEAQTDAHSFAALKPRADGFRNYIGGRQFMKPEEALVDRAQLLTLTGPEMTVLVGGLRVLKAGAPEHGVFTSRPETLTNDFFVNLLDMGTQWSPAAGRDGVYEGRDRKTNDVKWTGTRVDLIFGSHSQLRAFAEVYGQADTKEKFVRDFVAAWTKVMNADRFDLV</sequence>
<feature type="signal peptide" evidence="1">
    <location>
        <begin position="1"/>
        <end position="16"/>
    </location>
</feature>
<feature type="chain" id="PRO_0000354885" description="Catalase-peroxidase">
    <location>
        <begin position="17"/>
        <end position="726"/>
    </location>
</feature>
<feature type="region of interest" description="Disordered" evidence="2">
    <location>
        <begin position="1"/>
        <end position="26"/>
    </location>
</feature>
<feature type="active site" description="Proton acceptor" evidence="1">
    <location>
        <position position="97"/>
    </location>
</feature>
<feature type="binding site" description="axial binding residue" evidence="1">
    <location>
        <position position="259"/>
    </location>
    <ligand>
        <name>heme b</name>
        <dbReference type="ChEBI" id="CHEBI:60344"/>
    </ligand>
    <ligandPart>
        <name>Fe</name>
        <dbReference type="ChEBI" id="CHEBI:18248"/>
    </ligandPart>
</feature>
<feature type="site" description="Transition state stabilizer" evidence="1">
    <location>
        <position position="93"/>
    </location>
</feature>
<feature type="cross-link" description="Tryptophyl-tyrosyl-methioninium (Trp-Tyr) (with M-244)" evidence="1">
    <location>
        <begin position="96"/>
        <end position="218"/>
    </location>
</feature>
<feature type="cross-link" description="Tryptophyl-tyrosyl-methioninium (Tyr-Met) (with W-96)" evidence="1">
    <location>
        <begin position="218"/>
        <end position="244"/>
    </location>
</feature>
<protein>
    <recommendedName>
        <fullName evidence="1">Catalase-peroxidase</fullName>
        <shortName evidence="1">CP</shortName>
        <ecNumber evidence="1">1.11.1.21</ecNumber>
    </recommendedName>
    <alternativeName>
        <fullName evidence="1">Peroxidase/catalase</fullName>
    </alternativeName>
</protein>
<name>KATG_RHIJ3</name>
<proteinExistence type="inferred from homology"/>
<gene>
    <name evidence="1" type="primary">katG</name>
    <name type="ordered locus">pRL120362</name>
</gene>
<geneLocation type="plasmid">
    <name>pRL12</name>
</geneLocation>
<reference key="1">
    <citation type="journal article" date="2006" name="Genome Biol.">
        <title>The genome of Rhizobium leguminosarum has recognizable core and accessory components.</title>
        <authorList>
            <person name="Young J.P.W."/>
            <person name="Crossman L.C."/>
            <person name="Johnston A.W.B."/>
            <person name="Thomson N.R."/>
            <person name="Ghazoui Z.F."/>
            <person name="Hull K.H."/>
            <person name="Wexler M."/>
            <person name="Curson A.R.J."/>
            <person name="Todd J.D."/>
            <person name="Poole P.S."/>
            <person name="Mauchline T.H."/>
            <person name="East A.K."/>
            <person name="Quail M.A."/>
            <person name="Churcher C."/>
            <person name="Arrowsmith C."/>
            <person name="Cherevach I."/>
            <person name="Chillingworth T."/>
            <person name="Clarke K."/>
            <person name="Cronin A."/>
            <person name="Davis P."/>
            <person name="Fraser A."/>
            <person name="Hance Z."/>
            <person name="Hauser H."/>
            <person name="Jagels K."/>
            <person name="Moule S."/>
            <person name="Mungall K."/>
            <person name="Norbertczak H."/>
            <person name="Rabbinowitsch E."/>
            <person name="Sanders M."/>
            <person name="Simmonds M."/>
            <person name="Whitehead S."/>
            <person name="Parkhill J."/>
        </authorList>
    </citation>
    <scope>NUCLEOTIDE SEQUENCE [LARGE SCALE GENOMIC DNA]</scope>
    <source>
        <strain>DSM 114642 / LMG 32736 / 3841</strain>
    </source>
</reference>
<accession>Q1M498</accession>